<feature type="chain" id="PRO_1000009314" description="Leucine--tRNA ligase">
    <location>
        <begin position="1"/>
        <end position="863"/>
    </location>
</feature>
<feature type="short sequence motif" description="'HIGH' region">
    <location>
        <begin position="42"/>
        <end position="52"/>
    </location>
</feature>
<feature type="short sequence motif" description="'KMSKS' region">
    <location>
        <begin position="623"/>
        <end position="627"/>
    </location>
</feature>
<feature type="binding site" evidence="1">
    <location>
        <position position="626"/>
    </location>
    <ligand>
        <name>ATP</name>
        <dbReference type="ChEBI" id="CHEBI:30616"/>
    </ligand>
</feature>
<protein>
    <recommendedName>
        <fullName evidence="1">Leucine--tRNA ligase</fullName>
        <ecNumber evidence="1">6.1.1.4</ecNumber>
    </recommendedName>
    <alternativeName>
        <fullName evidence="1">Leucyl-tRNA synthetase</fullName>
        <shortName evidence="1">LeuRS</shortName>
    </alternativeName>
</protein>
<organism>
    <name type="scientific">Paraburkholderia xenovorans (strain LB400)</name>
    <dbReference type="NCBI Taxonomy" id="266265"/>
    <lineage>
        <taxon>Bacteria</taxon>
        <taxon>Pseudomonadati</taxon>
        <taxon>Pseudomonadota</taxon>
        <taxon>Betaproteobacteria</taxon>
        <taxon>Burkholderiales</taxon>
        <taxon>Burkholderiaceae</taxon>
        <taxon>Paraburkholderia</taxon>
    </lineage>
</organism>
<comment type="catalytic activity">
    <reaction evidence="1">
        <text>tRNA(Leu) + L-leucine + ATP = L-leucyl-tRNA(Leu) + AMP + diphosphate</text>
        <dbReference type="Rhea" id="RHEA:11688"/>
        <dbReference type="Rhea" id="RHEA-COMP:9613"/>
        <dbReference type="Rhea" id="RHEA-COMP:9622"/>
        <dbReference type="ChEBI" id="CHEBI:30616"/>
        <dbReference type="ChEBI" id="CHEBI:33019"/>
        <dbReference type="ChEBI" id="CHEBI:57427"/>
        <dbReference type="ChEBI" id="CHEBI:78442"/>
        <dbReference type="ChEBI" id="CHEBI:78494"/>
        <dbReference type="ChEBI" id="CHEBI:456215"/>
        <dbReference type="EC" id="6.1.1.4"/>
    </reaction>
</comment>
<comment type="subcellular location">
    <subcellularLocation>
        <location evidence="1">Cytoplasm</location>
    </subcellularLocation>
</comment>
<comment type="similarity">
    <text evidence="1">Belongs to the class-I aminoacyl-tRNA synthetase family.</text>
</comment>
<dbReference type="EC" id="6.1.1.4" evidence="1"/>
<dbReference type="EMBL" id="CP000270">
    <property type="protein sequence ID" value="ABE32357.1"/>
    <property type="molecule type" value="Genomic_DNA"/>
</dbReference>
<dbReference type="RefSeq" id="WP_011489837.1">
    <property type="nucleotide sequence ID" value="NC_007951.1"/>
</dbReference>
<dbReference type="SMR" id="Q13U82"/>
<dbReference type="STRING" id="266265.Bxe_A0576"/>
<dbReference type="KEGG" id="bxb:DR64_2749"/>
<dbReference type="KEGG" id="bxe:Bxe_A0576"/>
<dbReference type="PATRIC" id="fig|266265.5.peg.4035"/>
<dbReference type="eggNOG" id="COG0495">
    <property type="taxonomic scope" value="Bacteria"/>
</dbReference>
<dbReference type="OrthoDB" id="9810365at2"/>
<dbReference type="Proteomes" id="UP000001817">
    <property type="component" value="Chromosome 1"/>
</dbReference>
<dbReference type="GO" id="GO:0005829">
    <property type="term" value="C:cytosol"/>
    <property type="evidence" value="ECO:0007669"/>
    <property type="project" value="TreeGrafter"/>
</dbReference>
<dbReference type="GO" id="GO:0002161">
    <property type="term" value="F:aminoacyl-tRNA deacylase activity"/>
    <property type="evidence" value="ECO:0007669"/>
    <property type="project" value="InterPro"/>
</dbReference>
<dbReference type="GO" id="GO:0005524">
    <property type="term" value="F:ATP binding"/>
    <property type="evidence" value="ECO:0007669"/>
    <property type="project" value="UniProtKB-UniRule"/>
</dbReference>
<dbReference type="GO" id="GO:0004823">
    <property type="term" value="F:leucine-tRNA ligase activity"/>
    <property type="evidence" value="ECO:0007669"/>
    <property type="project" value="UniProtKB-UniRule"/>
</dbReference>
<dbReference type="GO" id="GO:0006429">
    <property type="term" value="P:leucyl-tRNA aminoacylation"/>
    <property type="evidence" value="ECO:0007669"/>
    <property type="project" value="UniProtKB-UniRule"/>
</dbReference>
<dbReference type="CDD" id="cd07958">
    <property type="entry name" value="Anticodon_Ia_Leu_BEm"/>
    <property type="match status" value="1"/>
</dbReference>
<dbReference type="CDD" id="cd00812">
    <property type="entry name" value="LeuRS_core"/>
    <property type="match status" value="1"/>
</dbReference>
<dbReference type="FunFam" id="1.10.730.10:FF:000002">
    <property type="entry name" value="Leucine--tRNA ligase"/>
    <property type="match status" value="1"/>
</dbReference>
<dbReference type="FunFam" id="2.20.28.290:FF:000001">
    <property type="entry name" value="Leucine--tRNA ligase"/>
    <property type="match status" value="1"/>
</dbReference>
<dbReference type="FunFam" id="3.10.20.590:FF:000001">
    <property type="entry name" value="Leucine--tRNA ligase"/>
    <property type="match status" value="1"/>
</dbReference>
<dbReference type="FunFam" id="3.40.50.620:FF:000003">
    <property type="entry name" value="Leucine--tRNA ligase"/>
    <property type="match status" value="1"/>
</dbReference>
<dbReference type="FunFam" id="3.40.50.620:FF:000056">
    <property type="entry name" value="Leucine--tRNA ligase"/>
    <property type="match status" value="1"/>
</dbReference>
<dbReference type="FunFam" id="3.90.740.10:FF:000012">
    <property type="entry name" value="Leucine--tRNA ligase"/>
    <property type="match status" value="1"/>
</dbReference>
<dbReference type="Gene3D" id="2.20.28.290">
    <property type="match status" value="1"/>
</dbReference>
<dbReference type="Gene3D" id="3.10.20.590">
    <property type="match status" value="1"/>
</dbReference>
<dbReference type="Gene3D" id="3.40.50.620">
    <property type="entry name" value="HUPs"/>
    <property type="match status" value="2"/>
</dbReference>
<dbReference type="Gene3D" id="1.10.730.10">
    <property type="entry name" value="Isoleucyl-tRNA Synthetase, Domain 1"/>
    <property type="match status" value="2"/>
</dbReference>
<dbReference type="Gene3D" id="3.90.740.10">
    <property type="entry name" value="Valyl/Leucyl/Isoleucyl-tRNA synthetase, editing domain"/>
    <property type="match status" value="1"/>
</dbReference>
<dbReference type="HAMAP" id="MF_00049_B">
    <property type="entry name" value="Leu_tRNA_synth_B"/>
    <property type="match status" value="1"/>
</dbReference>
<dbReference type="InterPro" id="IPR001412">
    <property type="entry name" value="aa-tRNA-synth_I_CS"/>
</dbReference>
<dbReference type="InterPro" id="IPR002300">
    <property type="entry name" value="aa-tRNA-synth_Ia"/>
</dbReference>
<dbReference type="InterPro" id="IPR002302">
    <property type="entry name" value="Leu-tRNA-ligase"/>
</dbReference>
<dbReference type="InterPro" id="IPR025709">
    <property type="entry name" value="Leu_tRNA-synth_edit"/>
</dbReference>
<dbReference type="InterPro" id="IPR013155">
    <property type="entry name" value="M/V/L/I-tRNA-synth_anticd-bd"/>
</dbReference>
<dbReference type="InterPro" id="IPR015413">
    <property type="entry name" value="Methionyl/Leucyl_tRNA_Synth"/>
</dbReference>
<dbReference type="InterPro" id="IPR014729">
    <property type="entry name" value="Rossmann-like_a/b/a_fold"/>
</dbReference>
<dbReference type="InterPro" id="IPR009080">
    <property type="entry name" value="tRNAsynth_Ia_anticodon-bd"/>
</dbReference>
<dbReference type="InterPro" id="IPR009008">
    <property type="entry name" value="Val/Leu/Ile-tRNA-synth_edit"/>
</dbReference>
<dbReference type="NCBIfam" id="TIGR00396">
    <property type="entry name" value="leuS_bact"/>
    <property type="match status" value="1"/>
</dbReference>
<dbReference type="PANTHER" id="PTHR43740:SF2">
    <property type="entry name" value="LEUCINE--TRNA LIGASE, MITOCHONDRIAL"/>
    <property type="match status" value="1"/>
</dbReference>
<dbReference type="PANTHER" id="PTHR43740">
    <property type="entry name" value="LEUCYL-TRNA SYNTHETASE"/>
    <property type="match status" value="1"/>
</dbReference>
<dbReference type="Pfam" id="PF08264">
    <property type="entry name" value="Anticodon_1"/>
    <property type="match status" value="1"/>
</dbReference>
<dbReference type="Pfam" id="PF00133">
    <property type="entry name" value="tRNA-synt_1"/>
    <property type="match status" value="2"/>
</dbReference>
<dbReference type="Pfam" id="PF13603">
    <property type="entry name" value="tRNA-synt_1_2"/>
    <property type="match status" value="1"/>
</dbReference>
<dbReference type="Pfam" id="PF09334">
    <property type="entry name" value="tRNA-synt_1g"/>
    <property type="match status" value="1"/>
</dbReference>
<dbReference type="PRINTS" id="PR00985">
    <property type="entry name" value="TRNASYNTHLEU"/>
</dbReference>
<dbReference type="SUPFAM" id="SSF47323">
    <property type="entry name" value="Anticodon-binding domain of a subclass of class I aminoacyl-tRNA synthetases"/>
    <property type="match status" value="1"/>
</dbReference>
<dbReference type="SUPFAM" id="SSF52374">
    <property type="entry name" value="Nucleotidylyl transferase"/>
    <property type="match status" value="1"/>
</dbReference>
<dbReference type="SUPFAM" id="SSF50677">
    <property type="entry name" value="ValRS/IleRS/LeuRS editing domain"/>
    <property type="match status" value="1"/>
</dbReference>
<dbReference type="PROSITE" id="PS00178">
    <property type="entry name" value="AA_TRNA_LIGASE_I"/>
    <property type="match status" value="1"/>
</dbReference>
<evidence type="ECO:0000255" key="1">
    <source>
        <dbReference type="HAMAP-Rule" id="MF_00049"/>
    </source>
</evidence>
<reference key="1">
    <citation type="journal article" date="2006" name="Proc. Natl. Acad. Sci. U.S.A.">
        <title>Burkholderia xenovorans LB400 harbors a multi-replicon, 9.73-Mbp genome shaped for versatility.</title>
        <authorList>
            <person name="Chain P.S.G."/>
            <person name="Denef V.J."/>
            <person name="Konstantinidis K.T."/>
            <person name="Vergez L.M."/>
            <person name="Agullo L."/>
            <person name="Reyes V.L."/>
            <person name="Hauser L."/>
            <person name="Cordova M."/>
            <person name="Gomez L."/>
            <person name="Gonzalez M."/>
            <person name="Land M."/>
            <person name="Lao V."/>
            <person name="Larimer F."/>
            <person name="LiPuma J.J."/>
            <person name="Mahenthiralingam E."/>
            <person name="Malfatti S.A."/>
            <person name="Marx C.J."/>
            <person name="Parnell J.J."/>
            <person name="Ramette A."/>
            <person name="Richardson P."/>
            <person name="Seeger M."/>
            <person name="Smith D."/>
            <person name="Spilker T."/>
            <person name="Sul W.J."/>
            <person name="Tsoi T.V."/>
            <person name="Ulrich L.E."/>
            <person name="Zhulin I.B."/>
            <person name="Tiedje J.M."/>
        </authorList>
    </citation>
    <scope>NUCLEOTIDE SEQUENCE [LARGE SCALE GENOMIC DNA]</scope>
    <source>
        <strain>LB400</strain>
    </source>
</reference>
<accession>Q13U82</accession>
<name>SYL_PARXL</name>
<gene>
    <name evidence="1" type="primary">leuS</name>
    <name type="ordered locus">Bxeno_A3819</name>
    <name type="ORF">Bxe_A0576</name>
</gene>
<proteinExistence type="inferred from homology"/>
<sequence>MHEKYVPSDVESAAQGQWRAIDAYKTTEVTDKPKFYCVSMLPYPSGKLHMGHVRNYTINDVMYRYLRMNGYNVLMPMGWDAFGMPAENAAMANNVPPAKWTYDNIAYMKKQMQSMGLAIDWSREVATCSPDYYKWNQWLFLKMLEKGIAYKKTGTVNWDPVDQTVLANEQVIDGRGWRSGALVEKREIPMYYMRITQYADELLNDLEGLGWPERVKIMQQNWIGKSFGVNFGFPYEIDGEQKLLRVFTTRADTIMGVTFCAIAAEHPLATRLAKDKPELQAFIEECKRGGVAEADVATMEKKGMATGFTVTHPLTQEQVEVWIGNYVLMSYGEGAVMGVPAHDERDFAFVKKYGLPVRQVVAVEGKEFSTEAWQEWYGEKTGTLINSGKYDGLNYEQAVDRIAADLKELGLGDKQITWRLRDWGVSRQRYWGTPIPIIHCPTCGDVPVPEKDLPVVLPEDLVPDGTGNPLARSEAFVNCTCPTCGGAAKRETDTMDTFVDSSWYFYRYASPGAKTMVDERTDYWAPMDQYIGGIEHAILHLLYSRFWAKVMRDLGLIRFGEPAKNLLTQGMVLNETYYRENEAGKKTWYNPAEVTVSFDDKGRPVGAILNEDGQPVVLGGVEKMSKSKNNGVDPQLLIDQHGADTARLFVMFAAPPEQSLEWSGSGVEGASRFLRRVWSFSQANEAALRQGGTFDAAQLSDVEKVLRREIYSVLKQADFDYQRLQYNTVVSAAMKMLNALDSAKGARPAVLRETCSVMLRVLYPVVPHLTFQLWQELGYADELGSLLDAPWPKVDEKALEQSEIELVLQVNGKVRGAITVAKDASREAIEQLAAAHEMVAKFSEGKAPKKIVVVPGRLVNVVV</sequence>
<keyword id="KW-0030">Aminoacyl-tRNA synthetase</keyword>
<keyword id="KW-0067">ATP-binding</keyword>
<keyword id="KW-0963">Cytoplasm</keyword>
<keyword id="KW-0436">Ligase</keyword>
<keyword id="KW-0547">Nucleotide-binding</keyword>
<keyword id="KW-0648">Protein biosynthesis</keyword>
<keyword id="KW-1185">Reference proteome</keyword>